<feature type="chain" id="PRO_1000165990" description="Large ribosomal subunit protein uL4">
    <location>
        <begin position="1"/>
        <end position="207"/>
    </location>
</feature>
<feature type="region of interest" description="Disordered" evidence="2">
    <location>
        <begin position="44"/>
        <end position="78"/>
    </location>
</feature>
<feature type="compositionally biased region" description="Basic and acidic residues" evidence="2">
    <location>
        <begin position="47"/>
        <end position="59"/>
    </location>
</feature>
<feature type="compositionally biased region" description="Basic residues" evidence="2">
    <location>
        <begin position="60"/>
        <end position="71"/>
    </location>
</feature>
<dbReference type="EMBL" id="AP008955">
    <property type="protein sequence ID" value="BAH41199.1"/>
    <property type="molecule type" value="Genomic_DNA"/>
</dbReference>
<dbReference type="RefSeq" id="WP_012683984.1">
    <property type="nucleotide sequence ID" value="NC_012491.1"/>
</dbReference>
<dbReference type="SMR" id="C0ZII1"/>
<dbReference type="STRING" id="358681.BBR47_02220"/>
<dbReference type="KEGG" id="bbe:BBR47_02220"/>
<dbReference type="eggNOG" id="COG0088">
    <property type="taxonomic scope" value="Bacteria"/>
</dbReference>
<dbReference type="HOGENOM" id="CLU_041575_5_2_9"/>
<dbReference type="Proteomes" id="UP000001877">
    <property type="component" value="Chromosome"/>
</dbReference>
<dbReference type="GO" id="GO:1990904">
    <property type="term" value="C:ribonucleoprotein complex"/>
    <property type="evidence" value="ECO:0007669"/>
    <property type="project" value="UniProtKB-KW"/>
</dbReference>
<dbReference type="GO" id="GO:0005840">
    <property type="term" value="C:ribosome"/>
    <property type="evidence" value="ECO:0007669"/>
    <property type="project" value="UniProtKB-KW"/>
</dbReference>
<dbReference type="GO" id="GO:0019843">
    <property type="term" value="F:rRNA binding"/>
    <property type="evidence" value="ECO:0007669"/>
    <property type="project" value="UniProtKB-UniRule"/>
</dbReference>
<dbReference type="GO" id="GO:0003735">
    <property type="term" value="F:structural constituent of ribosome"/>
    <property type="evidence" value="ECO:0007669"/>
    <property type="project" value="InterPro"/>
</dbReference>
<dbReference type="GO" id="GO:0006412">
    <property type="term" value="P:translation"/>
    <property type="evidence" value="ECO:0007669"/>
    <property type="project" value="UniProtKB-UniRule"/>
</dbReference>
<dbReference type="FunFam" id="3.40.1370.10:FF:000003">
    <property type="entry name" value="50S ribosomal protein L4"/>
    <property type="match status" value="1"/>
</dbReference>
<dbReference type="Gene3D" id="3.40.1370.10">
    <property type="match status" value="1"/>
</dbReference>
<dbReference type="HAMAP" id="MF_01328_B">
    <property type="entry name" value="Ribosomal_uL4_B"/>
    <property type="match status" value="1"/>
</dbReference>
<dbReference type="InterPro" id="IPR002136">
    <property type="entry name" value="Ribosomal_uL4"/>
</dbReference>
<dbReference type="InterPro" id="IPR013005">
    <property type="entry name" value="Ribosomal_uL4-like"/>
</dbReference>
<dbReference type="InterPro" id="IPR023574">
    <property type="entry name" value="Ribosomal_uL4_dom_sf"/>
</dbReference>
<dbReference type="NCBIfam" id="TIGR03953">
    <property type="entry name" value="rplD_bact"/>
    <property type="match status" value="1"/>
</dbReference>
<dbReference type="PANTHER" id="PTHR10746">
    <property type="entry name" value="50S RIBOSOMAL PROTEIN L4"/>
    <property type="match status" value="1"/>
</dbReference>
<dbReference type="PANTHER" id="PTHR10746:SF6">
    <property type="entry name" value="LARGE RIBOSOMAL SUBUNIT PROTEIN UL4M"/>
    <property type="match status" value="1"/>
</dbReference>
<dbReference type="Pfam" id="PF00573">
    <property type="entry name" value="Ribosomal_L4"/>
    <property type="match status" value="1"/>
</dbReference>
<dbReference type="SUPFAM" id="SSF52166">
    <property type="entry name" value="Ribosomal protein L4"/>
    <property type="match status" value="1"/>
</dbReference>
<evidence type="ECO:0000255" key="1">
    <source>
        <dbReference type="HAMAP-Rule" id="MF_01328"/>
    </source>
</evidence>
<evidence type="ECO:0000256" key="2">
    <source>
        <dbReference type="SAM" id="MobiDB-lite"/>
    </source>
</evidence>
<evidence type="ECO:0000305" key="3"/>
<sequence>MPKVALYNQTGSQVGEIDLADSVFGIEPNSAVLYDAIVMQQASQRQGTHDVKNRSEVRGGGRKPWRQKGTGRARQGSIRSPQWKGGGVVFGPTPRKYGYKLNRKVRRLALKSALSTKVQNNELLVLEALNFAAPKTKEMTAVLSSLKVDRKVLIVTSEYDQNVALASRNIPGTKIVDAAGINVLDLVAHDKVIVTREAVAKVEEVLA</sequence>
<reference key="1">
    <citation type="submission" date="2005-03" db="EMBL/GenBank/DDBJ databases">
        <title>Brevibacillus brevis strain 47, complete genome.</title>
        <authorList>
            <person name="Hosoyama A."/>
            <person name="Yamada R."/>
            <person name="Hongo Y."/>
            <person name="Terui Y."/>
            <person name="Ankai A."/>
            <person name="Masuyama W."/>
            <person name="Sekiguchi M."/>
            <person name="Takeda T."/>
            <person name="Asano K."/>
            <person name="Ohji S."/>
            <person name="Ichikawa N."/>
            <person name="Narita S."/>
            <person name="Aoki N."/>
            <person name="Miura H."/>
            <person name="Matsushita S."/>
            <person name="Sekigawa T."/>
            <person name="Yamagata H."/>
            <person name="Yoshikawa H."/>
            <person name="Udaka S."/>
            <person name="Tanikawa S."/>
            <person name="Fujita N."/>
        </authorList>
    </citation>
    <scope>NUCLEOTIDE SEQUENCE [LARGE SCALE GENOMIC DNA]</scope>
    <source>
        <strain>47 / JCM 6285 / NBRC 100599</strain>
    </source>
</reference>
<name>RL4_BREBN</name>
<gene>
    <name evidence="1" type="primary">rplD</name>
    <name type="ordered locus">BBR47_02220</name>
</gene>
<accession>C0ZII1</accession>
<organism>
    <name type="scientific">Brevibacillus brevis (strain 47 / JCM 6285 / NBRC 100599)</name>
    <dbReference type="NCBI Taxonomy" id="358681"/>
    <lineage>
        <taxon>Bacteria</taxon>
        <taxon>Bacillati</taxon>
        <taxon>Bacillota</taxon>
        <taxon>Bacilli</taxon>
        <taxon>Bacillales</taxon>
        <taxon>Paenibacillaceae</taxon>
        <taxon>Brevibacillus</taxon>
    </lineage>
</organism>
<comment type="function">
    <text evidence="1">One of the primary rRNA binding proteins, this protein initially binds near the 5'-end of the 23S rRNA. It is important during the early stages of 50S assembly. It makes multiple contacts with different domains of the 23S rRNA in the assembled 50S subunit and ribosome.</text>
</comment>
<comment type="function">
    <text evidence="1">Forms part of the polypeptide exit tunnel.</text>
</comment>
<comment type="subunit">
    <text evidence="1">Part of the 50S ribosomal subunit.</text>
</comment>
<comment type="similarity">
    <text evidence="1">Belongs to the universal ribosomal protein uL4 family.</text>
</comment>
<keyword id="KW-1185">Reference proteome</keyword>
<keyword id="KW-0687">Ribonucleoprotein</keyword>
<keyword id="KW-0689">Ribosomal protein</keyword>
<keyword id="KW-0694">RNA-binding</keyword>
<keyword id="KW-0699">rRNA-binding</keyword>
<proteinExistence type="inferred from homology"/>
<protein>
    <recommendedName>
        <fullName evidence="1">Large ribosomal subunit protein uL4</fullName>
    </recommendedName>
    <alternativeName>
        <fullName evidence="3">50S ribosomal protein L4</fullName>
    </alternativeName>
</protein>